<comment type="function">
    <text evidence="1">Binds 16S rRNA, required for the assembly of 30S particles and may also be responsible for determining the conformation of the 16S rRNA at the A site.</text>
</comment>
<comment type="subunit">
    <text evidence="1">Part of the 30S ribosomal subunit. Contacts proteins S3 and S10.</text>
</comment>
<comment type="similarity">
    <text evidence="1">Belongs to the universal ribosomal protein uS14 family.</text>
</comment>
<protein>
    <recommendedName>
        <fullName evidence="1">Small ribosomal subunit protein uS14</fullName>
    </recommendedName>
    <alternativeName>
        <fullName evidence="2">30S ribosomal protein S14</fullName>
    </alternativeName>
</protein>
<sequence length="89" mass="10290">MAKKSKIVKDQKQRELVLKYSKLRLELKKKADYAGLSQIPAKASPVRLKNRDSIDGRPRGYIRKFGISRINFRQLAHQGKLPGVRKTSW</sequence>
<name>RS14_AYWBP</name>
<feature type="chain" id="PRO_0000354379" description="Small ribosomal subunit protein uS14">
    <location>
        <begin position="1"/>
        <end position="89"/>
    </location>
</feature>
<proteinExistence type="inferred from homology"/>
<keyword id="KW-0687">Ribonucleoprotein</keyword>
<keyword id="KW-0689">Ribosomal protein</keyword>
<keyword id="KW-0694">RNA-binding</keyword>
<keyword id="KW-0699">rRNA-binding</keyword>
<gene>
    <name evidence="1" type="primary">rpsN</name>
    <name type="ordered locus">AYWB_509</name>
</gene>
<accession>Q2NIW7</accession>
<dbReference type="EMBL" id="CP000061">
    <property type="protein sequence ID" value="ABC65626.1"/>
    <property type="molecule type" value="Genomic_DNA"/>
</dbReference>
<dbReference type="RefSeq" id="WP_011412788.1">
    <property type="nucleotide sequence ID" value="NC_007716.1"/>
</dbReference>
<dbReference type="SMR" id="Q2NIW7"/>
<dbReference type="STRING" id="322098.AYWB_509"/>
<dbReference type="KEGG" id="ayw:AYWB_509"/>
<dbReference type="eggNOG" id="COG0199">
    <property type="taxonomic scope" value="Bacteria"/>
</dbReference>
<dbReference type="HOGENOM" id="CLU_139869_0_0_14"/>
<dbReference type="OrthoDB" id="9810484at2"/>
<dbReference type="PhylomeDB" id="Q2NIW7"/>
<dbReference type="Proteomes" id="UP000001934">
    <property type="component" value="Chromosome"/>
</dbReference>
<dbReference type="GO" id="GO:0005737">
    <property type="term" value="C:cytoplasm"/>
    <property type="evidence" value="ECO:0007669"/>
    <property type="project" value="UniProtKB-ARBA"/>
</dbReference>
<dbReference type="GO" id="GO:0015935">
    <property type="term" value="C:small ribosomal subunit"/>
    <property type="evidence" value="ECO:0007669"/>
    <property type="project" value="TreeGrafter"/>
</dbReference>
<dbReference type="GO" id="GO:0019843">
    <property type="term" value="F:rRNA binding"/>
    <property type="evidence" value="ECO:0007669"/>
    <property type="project" value="UniProtKB-UniRule"/>
</dbReference>
<dbReference type="GO" id="GO:0003735">
    <property type="term" value="F:structural constituent of ribosome"/>
    <property type="evidence" value="ECO:0007669"/>
    <property type="project" value="InterPro"/>
</dbReference>
<dbReference type="GO" id="GO:0006412">
    <property type="term" value="P:translation"/>
    <property type="evidence" value="ECO:0007669"/>
    <property type="project" value="UniProtKB-UniRule"/>
</dbReference>
<dbReference type="Gene3D" id="4.10.830.10">
    <property type="entry name" value="30s Ribosomal Protein S14, Chain N"/>
    <property type="match status" value="1"/>
</dbReference>
<dbReference type="HAMAP" id="MF_00537">
    <property type="entry name" value="Ribosomal_uS14_1"/>
    <property type="match status" value="1"/>
</dbReference>
<dbReference type="InterPro" id="IPR001209">
    <property type="entry name" value="Ribosomal_uS14"/>
</dbReference>
<dbReference type="InterPro" id="IPR023036">
    <property type="entry name" value="Ribosomal_uS14_bac/plastid"/>
</dbReference>
<dbReference type="InterPro" id="IPR043140">
    <property type="entry name" value="Ribosomal_uS14_sf"/>
</dbReference>
<dbReference type="NCBIfam" id="NF006477">
    <property type="entry name" value="PRK08881.1"/>
    <property type="match status" value="1"/>
</dbReference>
<dbReference type="PANTHER" id="PTHR19836">
    <property type="entry name" value="30S RIBOSOMAL PROTEIN S14"/>
    <property type="match status" value="1"/>
</dbReference>
<dbReference type="PANTHER" id="PTHR19836:SF19">
    <property type="entry name" value="SMALL RIBOSOMAL SUBUNIT PROTEIN US14M"/>
    <property type="match status" value="1"/>
</dbReference>
<dbReference type="Pfam" id="PF00253">
    <property type="entry name" value="Ribosomal_S14"/>
    <property type="match status" value="1"/>
</dbReference>
<dbReference type="SUPFAM" id="SSF57716">
    <property type="entry name" value="Glucocorticoid receptor-like (DNA-binding domain)"/>
    <property type="match status" value="1"/>
</dbReference>
<reference key="1">
    <citation type="journal article" date="2006" name="J. Bacteriol.">
        <title>Living with genome instability: the adaptation of phytoplasmas to diverse environments of their insect and plant hosts.</title>
        <authorList>
            <person name="Bai X."/>
            <person name="Zhang J."/>
            <person name="Ewing A."/>
            <person name="Miller S.A."/>
            <person name="Jancso Radek A."/>
            <person name="Shevchenko D.V."/>
            <person name="Tsukerman K."/>
            <person name="Walunas T."/>
            <person name="Lapidus A."/>
            <person name="Campbell J.W."/>
            <person name="Hogenhout S.A."/>
        </authorList>
    </citation>
    <scope>NUCLEOTIDE SEQUENCE [LARGE SCALE GENOMIC DNA]</scope>
    <source>
        <strain>AYWB</strain>
    </source>
</reference>
<evidence type="ECO:0000255" key="1">
    <source>
        <dbReference type="HAMAP-Rule" id="MF_00537"/>
    </source>
</evidence>
<evidence type="ECO:0000305" key="2"/>
<organism>
    <name type="scientific">Aster yellows witches'-broom phytoplasma (strain AYWB)</name>
    <dbReference type="NCBI Taxonomy" id="322098"/>
    <lineage>
        <taxon>Bacteria</taxon>
        <taxon>Bacillati</taxon>
        <taxon>Mycoplasmatota</taxon>
        <taxon>Mollicutes</taxon>
        <taxon>Acholeplasmatales</taxon>
        <taxon>Acholeplasmataceae</taxon>
        <taxon>Candidatus Phytoplasma</taxon>
        <taxon>16SrI (Aster yellows group)</taxon>
    </lineage>
</organism>